<feature type="chain" id="PRO_0000370082" description="3-deoxy-manno-octulosonate cytidylyltransferase">
    <location>
        <begin position="1"/>
        <end position="250"/>
    </location>
</feature>
<protein>
    <recommendedName>
        <fullName evidence="1">3-deoxy-manno-octulosonate cytidylyltransferase</fullName>
        <ecNumber evidence="1">2.7.7.38</ecNumber>
    </recommendedName>
    <alternativeName>
        <fullName evidence="1">CMP-2-keto-3-deoxyoctulosonic acid synthase</fullName>
        <shortName evidence="1">CKS</shortName>
        <shortName evidence="1">CMP-KDO synthase</shortName>
    </alternativeName>
</protein>
<keyword id="KW-0963">Cytoplasm</keyword>
<keyword id="KW-0448">Lipopolysaccharide biosynthesis</keyword>
<keyword id="KW-0548">Nucleotidyltransferase</keyword>
<keyword id="KW-1185">Reference proteome</keyword>
<keyword id="KW-0808">Transferase</keyword>
<reference key="1">
    <citation type="journal article" date="2004" name="Science">
        <title>The genomic sequence of the accidental pathogen Legionella pneumophila.</title>
        <authorList>
            <person name="Chien M."/>
            <person name="Morozova I."/>
            <person name="Shi S."/>
            <person name="Sheng H."/>
            <person name="Chen J."/>
            <person name="Gomez S.M."/>
            <person name="Asamani G."/>
            <person name="Hill K."/>
            <person name="Nuara J."/>
            <person name="Feder M."/>
            <person name="Rineer J."/>
            <person name="Greenberg J.J."/>
            <person name="Steshenko V."/>
            <person name="Park S.H."/>
            <person name="Zhao B."/>
            <person name="Teplitskaya E."/>
            <person name="Edwards J.R."/>
            <person name="Pampou S."/>
            <person name="Georghiou A."/>
            <person name="Chou I.-C."/>
            <person name="Iannuccilli W."/>
            <person name="Ulz M.E."/>
            <person name="Kim D.H."/>
            <person name="Geringer-Sameth A."/>
            <person name="Goldsberry C."/>
            <person name="Morozov P."/>
            <person name="Fischer S.G."/>
            <person name="Segal G."/>
            <person name="Qu X."/>
            <person name="Rzhetsky A."/>
            <person name="Zhang P."/>
            <person name="Cayanis E."/>
            <person name="De Jong P.J."/>
            <person name="Ju J."/>
            <person name="Kalachikov S."/>
            <person name="Shuman H.A."/>
            <person name="Russo J.J."/>
        </authorList>
    </citation>
    <scope>NUCLEOTIDE SEQUENCE [LARGE SCALE GENOMIC DNA]</scope>
    <source>
        <strain>Philadelphia 1 / ATCC 33152 / DSM 7513</strain>
    </source>
</reference>
<comment type="function">
    <text evidence="1">Activates KDO (a required 8-carbon sugar) for incorporation into bacterial lipopolysaccharide in Gram-negative bacteria.</text>
</comment>
<comment type="catalytic activity">
    <reaction evidence="1">
        <text>3-deoxy-alpha-D-manno-oct-2-ulosonate + CTP = CMP-3-deoxy-beta-D-manno-octulosonate + diphosphate</text>
        <dbReference type="Rhea" id="RHEA:23448"/>
        <dbReference type="ChEBI" id="CHEBI:33019"/>
        <dbReference type="ChEBI" id="CHEBI:37563"/>
        <dbReference type="ChEBI" id="CHEBI:85986"/>
        <dbReference type="ChEBI" id="CHEBI:85987"/>
        <dbReference type="EC" id="2.7.7.38"/>
    </reaction>
</comment>
<comment type="pathway">
    <text evidence="1">Nucleotide-sugar biosynthesis; CMP-3-deoxy-D-manno-octulosonate biosynthesis; CMP-3-deoxy-D-manno-octulosonate from 3-deoxy-D-manno-octulosonate and CTP: step 1/1.</text>
</comment>
<comment type="pathway">
    <text evidence="1">Bacterial outer membrane biogenesis; lipopolysaccharide biosynthesis.</text>
</comment>
<comment type="subcellular location">
    <subcellularLocation>
        <location evidence="1">Cytoplasm</location>
    </subcellularLocation>
</comment>
<comment type="similarity">
    <text evidence="1">Belongs to the KdsB family.</text>
</comment>
<evidence type="ECO:0000255" key="1">
    <source>
        <dbReference type="HAMAP-Rule" id="MF_00057"/>
    </source>
</evidence>
<gene>
    <name evidence="1" type="primary">kdsB</name>
    <name type="ordered locus">lpg1919</name>
</gene>
<accession>Q5ZU88</accession>
<organism>
    <name type="scientific">Legionella pneumophila subsp. pneumophila (strain Philadelphia 1 / ATCC 33152 / DSM 7513)</name>
    <dbReference type="NCBI Taxonomy" id="272624"/>
    <lineage>
        <taxon>Bacteria</taxon>
        <taxon>Pseudomonadati</taxon>
        <taxon>Pseudomonadota</taxon>
        <taxon>Gammaproteobacteria</taxon>
        <taxon>Legionellales</taxon>
        <taxon>Legionellaceae</taxon>
        <taxon>Legionella</taxon>
    </lineage>
</organism>
<sequence>MSHNFHVIIPARYHSSRFPGKLLQEINGITVIERVYRQALLAEPKSVIIATDHDEIADRAIQFGAEVVITSHTHQTGTDRIAEVIAKGSFAPDDVIVNVQGDEPFIRPKLIQQVACSLTKTKAPVSTLCWPISSLEILNNPNVVKVVCTRDNHALYFSRSAIPFHRDDKNAYSNTFRHIGLYAYRAAFLLEFVSWPPCTLEQIECLEQLRILWSGFSIRVDEACEEPLQDINTKEDLILAQQYFLDTFNV</sequence>
<dbReference type="EC" id="2.7.7.38" evidence="1"/>
<dbReference type="EMBL" id="AE017354">
    <property type="protein sequence ID" value="AAU27989.1"/>
    <property type="molecule type" value="Genomic_DNA"/>
</dbReference>
<dbReference type="RefSeq" id="WP_010947636.1">
    <property type="nucleotide sequence ID" value="NC_002942.5"/>
</dbReference>
<dbReference type="RefSeq" id="YP_095936.1">
    <property type="nucleotide sequence ID" value="NC_002942.5"/>
</dbReference>
<dbReference type="SMR" id="Q5ZU88"/>
<dbReference type="STRING" id="272624.lpg1919"/>
<dbReference type="PaxDb" id="272624-lpg1919"/>
<dbReference type="GeneID" id="57035911"/>
<dbReference type="KEGG" id="lpn:lpg1919"/>
<dbReference type="PATRIC" id="fig|272624.6.peg.2004"/>
<dbReference type="eggNOG" id="COG1212">
    <property type="taxonomic scope" value="Bacteria"/>
</dbReference>
<dbReference type="HOGENOM" id="CLU_065038_1_0_6"/>
<dbReference type="OrthoDB" id="9815559at2"/>
<dbReference type="UniPathway" id="UPA00030"/>
<dbReference type="UniPathway" id="UPA00358">
    <property type="reaction ID" value="UER00476"/>
</dbReference>
<dbReference type="Proteomes" id="UP000000609">
    <property type="component" value="Chromosome"/>
</dbReference>
<dbReference type="GO" id="GO:0005829">
    <property type="term" value="C:cytosol"/>
    <property type="evidence" value="ECO:0007669"/>
    <property type="project" value="TreeGrafter"/>
</dbReference>
<dbReference type="GO" id="GO:0008690">
    <property type="term" value="F:3-deoxy-manno-octulosonate cytidylyltransferase activity"/>
    <property type="evidence" value="ECO:0007669"/>
    <property type="project" value="UniProtKB-UniRule"/>
</dbReference>
<dbReference type="GO" id="GO:0033468">
    <property type="term" value="P:CMP-keto-3-deoxy-D-manno-octulosonic acid biosynthetic process"/>
    <property type="evidence" value="ECO:0007669"/>
    <property type="project" value="UniProtKB-UniRule"/>
</dbReference>
<dbReference type="GO" id="GO:0009103">
    <property type="term" value="P:lipopolysaccharide biosynthetic process"/>
    <property type="evidence" value="ECO:0007669"/>
    <property type="project" value="UniProtKB-UniRule"/>
</dbReference>
<dbReference type="CDD" id="cd02517">
    <property type="entry name" value="CMP-KDO-Synthetase"/>
    <property type="match status" value="1"/>
</dbReference>
<dbReference type="FunFam" id="3.90.550.10:FF:000011">
    <property type="entry name" value="3-deoxy-manno-octulosonate cytidylyltransferase"/>
    <property type="match status" value="1"/>
</dbReference>
<dbReference type="Gene3D" id="3.90.550.10">
    <property type="entry name" value="Spore Coat Polysaccharide Biosynthesis Protein SpsA, Chain A"/>
    <property type="match status" value="1"/>
</dbReference>
<dbReference type="HAMAP" id="MF_00057">
    <property type="entry name" value="KdsB"/>
    <property type="match status" value="1"/>
</dbReference>
<dbReference type="InterPro" id="IPR003329">
    <property type="entry name" value="Cytidylyl_trans"/>
</dbReference>
<dbReference type="InterPro" id="IPR004528">
    <property type="entry name" value="KdsB"/>
</dbReference>
<dbReference type="InterPro" id="IPR029044">
    <property type="entry name" value="Nucleotide-diphossugar_trans"/>
</dbReference>
<dbReference type="NCBIfam" id="TIGR00466">
    <property type="entry name" value="kdsB"/>
    <property type="match status" value="1"/>
</dbReference>
<dbReference type="NCBIfam" id="NF003950">
    <property type="entry name" value="PRK05450.1-3"/>
    <property type="match status" value="1"/>
</dbReference>
<dbReference type="NCBIfam" id="NF003952">
    <property type="entry name" value="PRK05450.1-5"/>
    <property type="match status" value="1"/>
</dbReference>
<dbReference type="NCBIfam" id="NF009905">
    <property type="entry name" value="PRK13368.1"/>
    <property type="match status" value="1"/>
</dbReference>
<dbReference type="PANTHER" id="PTHR42866">
    <property type="entry name" value="3-DEOXY-MANNO-OCTULOSONATE CYTIDYLYLTRANSFERASE"/>
    <property type="match status" value="1"/>
</dbReference>
<dbReference type="PANTHER" id="PTHR42866:SF2">
    <property type="entry name" value="3-DEOXY-MANNO-OCTULOSONATE CYTIDYLYLTRANSFERASE, MITOCHONDRIAL"/>
    <property type="match status" value="1"/>
</dbReference>
<dbReference type="Pfam" id="PF02348">
    <property type="entry name" value="CTP_transf_3"/>
    <property type="match status" value="1"/>
</dbReference>
<dbReference type="SUPFAM" id="SSF53448">
    <property type="entry name" value="Nucleotide-diphospho-sugar transferases"/>
    <property type="match status" value="1"/>
</dbReference>
<proteinExistence type="inferred from homology"/>
<name>KDSB_LEGPH</name>